<accession>Q9VUV9</accession>
<accession>Q5U0X1</accession>
<accession>Q8T9I9</accession>
<evidence type="ECO:0000250" key="1">
    <source>
        <dbReference type="UniProtKB" id="O75643"/>
    </source>
</evidence>
<evidence type="ECO:0000255" key="2">
    <source>
        <dbReference type="PROSITE-ProRule" id="PRU00541"/>
    </source>
</evidence>
<evidence type="ECO:0000255" key="3">
    <source>
        <dbReference type="PROSITE-ProRule" id="PRU00542"/>
    </source>
</evidence>
<evidence type="ECO:0000256" key="4">
    <source>
        <dbReference type="SAM" id="MobiDB-lite"/>
    </source>
</evidence>
<evidence type="ECO:0000305" key="5"/>
<evidence type="ECO:0000312" key="6">
    <source>
        <dbReference type="FlyBase" id="FBgn0263599"/>
    </source>
</evidence>
<comment type="function">
    <text evidence="1">Catalyzes the ATP-dependent unwinding of U4/U6 RNA duplices, an essential step in the assembly of a catalytically active spliceosome (By similarity). Plays a role in pre-mRNA splicing (By similarity).</text>
</comment>
<comment type="catalytic activity">
    <reaction evidence="1">
        <text>ATP + H2O = ADP + phosphate + H(+)</text>
        <dbReference type="Rhea" id="RHEA:13065"/>
        <dbReference type="ChEBI" id="CHEBI:15377"/>
        <dbReference type="ChEBI" id="CHEBI:15378"/>
        <dbReference type="ChEBI" id="CHEBI:30616"/>
        <dbReference type="ChEBI" id="CHEBI:43474"/>
        <dbReference type="ChEBI" id="CHEBI:456216"/>
        <dbReference type="EC" id="3.6.4.13"/>
    </reaction>
</comment>
<comment type="subcellular location">
    <subcellularLocation>
        <location evidence="1">Nucleus</location>
    </subcellularLocation>
</comment>
<comment type="domain">
    <text>Composed of two similar domains.</text>
</comment>
<comment type="similarity">
    <text evidence="5">Belongs to the helicase family. SKI2 subfamily.</text>
</comment>
<comment type="sequence caution" evidence="5">
    <conflict type="erroneous initiation">
        <sequence resource="EMBL-CDS" id="AAL39415"/>
    </conflict>
</comment>
<dbReference type="EC" id="3.6.4.13" evidence="1"/>
<dbReference type="EMBL" id="AE014296">
    <property type="protein sequence ID" value="AAF49564.4"/>
    <property type="molecule type" value="Genomic_DNA"/>
</dbReference>
<dbReference type="EMBL" id="BT016121">
    <property type="protein sequence ID" value="AAV37006.1"/>
    <property type="molecule type" value="mRNA"/>
</dbReference>
<dbReference type="EMBL" id="AY069270">
    <property type="protein sequence ID" value="AAL39415.1"/>
    <property type="status" value="ALT_INIT"/>
    <property type="molecule type" value="mRNA"/>
</dbReference>
<dbReference type="RefSeq" id="NP_648818.3">
    <property type="nucleotide sequence ID" value="NM_140561.4"/>
</dbReference>
<dbReference type="SMR" id="Q9VUV9"/>
<dbReference type="BioGRID" id="65049">
    <property type="interactions" value="23"/>
</dbReference>
<dbReference type="FunCoup" id="Q9VUV9">
    <property type="interactions" value="2845"/>
</dbReference>
<dbReference type="IntAct" id="Q9VUV9">
    <property type="interactions" value="31"/>
</dbReference>
<dbReference type="MINT" id="Q9VUV9"/>
<dbReference type="STRING" id="7227.FBpp0075282"/>
<dbReference type="PaxDb" id="7227-FBpp0075282"/>
<dbReference type="DNASU" id="39737"/>
<dbReference type="EnsemblMetazoa" id="FBtr0075527">
    <property type="protein sequence ID" value="FBpp0075282"/>
    <property type="gene ID" value="FBgn0263599"/>
</dbReference>
<dbReference type="GeneID" id="39737"/>
<dbReference type="KEGG" id="dme:Dmel_CG5931"/>
<dbReference type="AGR" id="FB:FBgn0263599"/>
<dbReference type="CTD" id="39737"/>
<dbReference type="FlyBase" id="FBgn0263599">
    <property type="gene designation" value="Brr2"/>
</dbReference>
<dbReference type="VEuPathDB" id="VectorBase:FBgn0263599"/>
<dbReference type="eggNOG" id="KOG0951">
    <property type="taxonomic scope" value="Eukaryota"/>
</dbReference>
<dbReference type="GeneTree" id="ENSGT00940000154966"/>
<dbReference type="HOGENOM" id="CLU_000335_2_1_1"/>
<dbReference type="InParanoid" id="Q9VUV9"/>
<dbReference type="OMA" id="MNPKEFN"/>
<dbReference type="OrthoDB" id="5575at2759"/>
<dbReference type="PhylomeDB" id="Q9VUV9"/>
<dbReference type="Reactome" id="R-DME-72163">
    <property type="pathway name" value="mRNA Splicing - Major Pathway"/>
</dbReference>
<dbReference type="Reactome" id="R-DME-72165">
    <property type="pathway name" value="mRNA Splicing - Minor Pathway"/>
</dbReference>
<dbReference type="SignaLink" id="Q9VUV9"/>
<dbReference type="BioGRID-ORCS" id="39737">
    <property type="hits" value="0 hits in 1 CRISPR screen"/>
</dbReference>
<dbReference type="ChiTaRS" id="l(3)72Ab">
    <property type="organism name" value="fly"/>
</dbReference>
<dbReference type="GenomeRNAi" id="39737"/>
<dbReference type="PRO" id="PR:Q9VUV9"/>
<dbReference type="Proteomes" id="UP000000803">
    <property type="component" value="Chromosome 3L"/>
</dbReference>
<dbReference type="Bgee" id="FBgn0263599">
    <property type="expression patterns" value="Expressed in eye disc (Drosophila) and 123 other cell types or tissues"/>
</dbReference>
<dbReference type="GO" id="GO:0071013">
    <property type="term" value="C:catalytic step 2 spliceosome"/>
    <property type="evidence" value="ECO:0007005"/>
    <property type="project" value="FlyBase"/>
</dbReference>
<dbReference type="GO" id="GO:0005634">
    <property type="term" value="C:nucleus"/>
    <property type="evidence" value="ECO:0000314"/>
    <property type="project" value="FlyBase"/>
</dbReference>
<dbReference type="GO" id="GO:0071011">
    <property type="term" value="C:precatalytic spliceosome"/>
    <property type="evidence" value="ECO:0007005"/>
    <property type="project" value="FlyBase"/>
</dbReference>
<dbReference type="GO" id="GO:0030532">
    <property type="term" value="C:small nuclear ribonucleoprotein complex"/>
    <property type="evidence" value="ECO:0000353"/>
    <property type="project" value="FlyBase"/>
</dbReference>
<dbReference type="GO" id="GO:0005681">
    <property type="term" value="C:spliceosomal complex"/>
    <property type="evidence" value="ECO:0000250"/>
    <property type="project" value="UniProtKB"/>
</dbReference>
<dbReference type="GO" id="GO:0005524">
    <property type="term" value="F:ATP binding"/>
    <property type="evidence" value="ECO:0007669"/>
    <property type="project" value="UniProtKB-KW"/>
</dbReference>
<dbReference type="GO" id="GO:0016887">
    <property type="term" value="F:ATP hydrolysis activity"/>
    <property type="evidence" value="ECO:0007669"/>
    <property type="project" value="RHEA"/>
</dbReference>
<dbReference type="GO" id="GO:0003676">
    <property type="term" value="F:nucleic acid binding"/>
    <property type="evidence" value="ECO:0007669"/>
    <property type="project" value="InterPro"/>
</dbReference>
<dbReference type="GO" id="GO:0003724">
    <property type="term" value="F:RNA helicase activity"/>
    <property type="evidence" value="ECO:0000250"/>
    <property type="project" value="FlyBase"/>
</dbReference>
<dbReference type="GO" id="GO:0000278">
    <property type="term" value="P:mitotic cell cycle"/>
    <property type="evidence" value="ECO:0007001"/>
    <property type="project" value="FlyBase"/>
</dbReference>
<dbReference type="GO" id="GO:0000398">
    <property type="term" value="P:mRNA splicing, via spliceosome"/>
    <property type="evidence" value="ECO:0000315"/>
    <property type="project" value="FlyBase"/>
</dbReference>
<dbReference type="GO" id="GO:0000381">
    <property type="term" value="P:regulation of alternative mRNA splicing, via spliceosome"/>
    <property type="evidence" value="ECO:0000315"/>
    <property type="project" value="FlyBase"/>
</dbReference>
<dbReference type="GO" id="GO:0007283">
    <property type="term" value="P:spermatogenesis"/>
    <property type="evidence" value="ECO:0000315"/>
    <property type="project" value="FlyBase"/>
</dbReference>
<dbReference type="GO" id="GO:0000388">
    <property type="term" value="P:spliceosome conformational change to release U4 (or U4atac) and U1 (or U11)"/>
    <property type="evidence" value="ECO:0000318"/>
    <property type="project" value="GO_Central"/>
</dbReference>
<dbReference type="GO" id="GO:0007419">
    <property type="term" value="P:ventral cord development"/>
    <property type="evidence" value="ECO:0007001"/>
    <property type="project" value="FlyBase"/>
</dbReference>
<dbReference type="CDD" id="cd18019">
    <property type="entry name" value="DEXHc_Brr2_1"/>
    <property type="match status" value="1"/>
</dbReference>
<dbReference type="CDD" id="cd18021">
    <property type="entry name" value="DEXHc_Brr2_2"/>
    <property type="match status" value="1"/>
</dbReference>
<dbReference type="CDD" id="cd18795">
    <property type="entry name" value="SF2_C_Ski2"/>
    <property type="match status" value="2"/>
</dbReference>
<dbReference type="FunFam" id="2.60.40.150:FF:000004">
    <property type="entry name" value="RNA helicase, activating signal cointegrator 1"/>
    <property type="match status" value="1"/>
</dbReference>
<dbReference type="FunFam" id="1.10.3380.10:FF:000004">
    <property type="entry name" value="U5 small nuclear ribonucleoprotein 200 kDa helicase"/>
    <property type="match status" value="1"/>
</dbReference>
<dbReference type="FunFam" id="2.60.40.150:FF:000048">
    <property type="entry name" value="U5 small nuclear ribonucleoprotein 200 kDa helicase"/>
    <property type="match status" value="1"/>
</dbReference>
<dbReference type="FunFam" id="3.40.50.300:FF:000368">
    <property type="entry name" value="U5 small nuclear ribonucleoprotein 200 kDa helicase"/>
    <property type="match status" value="1"/>
</dbReference>
<dbReference type="FunFam" id="3.40.50.300:FF:003287">
    <property type="entry name" value="U5 small nuclear ribonucleoprotein 200 kDa helicase"/>
    <property type="match status" value="1"/>
</dbReference>
<dbReference type="FunFam" id="1.10.10.10:FF:000012">
    <property type="entry name" value="U5 small nuclear ribonucleoprotein helicase"/>
    <property type="match status" value="1"/>
</dbReference>
<dbReference type="FunFam" id="1.10.10.10:FF:000024">
    <property type="entry name" value="U5 small nuclear ribonucleoprotein helicase"/>
    <property type="match status" value="1"/>
</dbReference>
<dbReference type="FunFam" id="1.10.150.20:FF:000004">
    <property type="entry name" value="U5 small nuclear ribonucleoprotein helicase"/>
    <property type="match status" value="1"/>
</dbReference>
<dbReference type="FunFam" id="1.10.3380.10:FF:000001">
    <property type="entry name" value="U5 small nuclear ribonucleoprotein helicase"/>
    <property type="match status" value="1"/>
</dbReference>
<dbReference type="FunFam" id="3.40.50.300:FF:000062">
    <property type="entry name" value="U5 small nuclear ribonucleoprotein helicase"/>
    <property type="match status" value="1"/>
</dbReference>
<dbReference type="FunFam" id="3.40.50.300:FF:000254">
    <property type="entry name" value="U5 small nuclear ribonucleoprotein helicase"/>
    <property type="match status" value="1"/>
</dbReference>
<dbReference type="FunFam" id="1.10.150.20:FF:000013">
    <property type="entry name" value="U5 small nuclear ribonucleoprotein kDa helicase"/>
    <property type="match status" value="1"/>
</dbReference>
<dbReference type="Gene3D" id="1.10.150.20">
    <property type="entry name" value="5' to 3' exonuclease, C-terminal subdomain"/>
    <property type="match status" value="2"/>
</dbReference>
<dbReference type="Gene3D" id="2.60.40.150">
    <property type="entry name" value="C2 domain"/>
    <property type="match status" value="2"/>
</dbReference>
<dbReference type="Gene3D" id="3.40.50.300">
    <property type="entry name" value="P-loop containing nucleotide triphosphate hydrolases"/>
    <property type="match status" value="4"/>
</dbReference>
<dbReference type="Gene3D" id="1.10.3380.10">
    <property type="entry name" value="Sec63 N-terminal domain-like domain"/>
    <property type="match status" value="2"/>
</dbReference>
<dbReference type="Gene3D" id="1.10.10.10">
    <property type="entry name" value="Winged helix-like DNA-binding domain superfamily/Winged helix DNA-binding domain"/>
    <property type="match status" value="2"/>
</dbReference>
<dbReference type="InterPro" id="IPR041094">
    <property type="entry name" value="Brr2_helicase_PWI"/>
</dbReference>
<dbReference type="InterPro" id="IPR048863">
    <property type="entry name" value="BRR2_plug"/>
</dbReference>
<dbReference type="InterPro" id="IPR035892">
    <property type="entry name" value="C2_domain_sf"/>
</dbReference>
<dbReference type="InterPro" id="IPR011545">
    <property type="entry name" value="DEAD/DEAH_box_helicase_dom"/>
</dbReference>
<dbReference type="InterPro" id="IPR050474">
    <property type="entry name" value="Hel308_SKI2-like"/>
</dbReference>
<dbReference type="InterPro" id="IPR014001">
    <property type="entry name" value="Helicase_ATP-bd"/>
</dbReference>
<dbReference type="InterPro" id="IPR001650">
    <property type="entry name" value="Helicase_C-like"/>
</dbReference>
<dbReference type="InterPro" id="IPR014756">
    <property type="entry name" value="Ig_E-set"/>
</dbReference>
<dbReference type="InterPro" id="IPR027417">
    <property type="entry name" value="P-loop_NTPase"/>
</dbReference>
<dbReference type="InterPro" id="IPR004179">
    <property type="entry name" value="Sec63-dom"/>
</dbReference>
<dbReference type="InterPro" id="IPR036388">
    <property type="entry name" value="WH-like_DNA-bd_sf"/>
</dbReference>
<dbReference type="InterPro" id="IPR036390">
    <property type="entry name" value="WH_DNA-bd_sf"/>
</dbReference>
<dbReference type="PANTHER" id="PTHR47961:SF4">
    <property type="entry name" value="ACTIVATING SIGNAL COINTEGRATOR 1 COMPLEX SUBUNIT 3"/>
    <property type="match status" value="1"/>
</dbReference>
<dbReference type="PANTHER" id="PTHR47961">
    <property type="entry name" value="DNA POLYMERASE THETA, PUTATIVE (AFU_ORTHOLOGUE AFUA_1G05260)-RELATED"/>
    <property type="match status" value="1"/>
</dbReference>
<dbReference type="Pfam" id="PF21188">
    <property type="entry name" value="BRR2_plug"/>
    <property type="match status" value="1"/>
</dbReference>
<dbReference type="Pfam" id="PF00270">
    <property type="entry name" value="DEAD"/>
    <property type="match status" value="2"/>
</dbReference>
<dbReference type="Pfam" id="PF00271">
    <property type="entry name" value="Helicase_C"/>
    <property type="match status" value="1"/>
</dbReference>
<dbReference type="Pfam" id="PF18149">
    <property type="entry name" value="Helicase_PWI"/>
    <property type="match status" value="1"/>
</dbReference>
<dbReference type="Pfam" id="PF02889">
    <property type="entry name" value="Sec63"/>
    <property type="match status" value="2"/>
</dbReference>
<dbReference type="Pfam" id="PF23445">
    <property type="entry name" value="SNRNP200_wHTH"/>
    <property type="match status" value="2"/>
</dbReference>
<dbReference type="PIRSF" id="PIRSF039073">
    <property type="entry name" value="BRR2"/>
    <property type="match status" value="1"/>
</dbReference>
<dbReference type="SMART" id="SM00487">
    <property type="entry name" value="DEXDc"/>
    <property type="match status" value="2"/>
</dbReference>
<dbReference type="SMART" id="SM00490">
    <property type="entry name" value="HELICc"/>
    <property type="match status" value="2"/>
</dbReference>
<dbReference type="SMART" id="SM00973">
    <property type="entry name" value="Sec63"/>
    <property type="match status" value="2"/>
</dbReference>
<dbReference type="SUPFAM" id="SSF81296">
    <property type="entry name" value="E set domains"/>
    <property type="match status" value="1"/>
</dbReference>
<dbReference type="SUPFAM" id="SSF52540">
    <property type="entry name" value="P-loop containing nucleoside triphosphate hydrolases"/>
    <property type="match status" value="4"/>
</dbReference>
<dbReference type="SUPFAM" id="SSF158702">
    <property type="entry name" value="Sec63 N-terminal domain-like"/>
    <property type="match status" value="2"/>
</dbReference>
<dbReference type="SUPFAM" id="SSF46785">
    <property type="entry name" value="Winged helix' DNA-binding domain"/>
    <property type="match status" value="2"/>
</dbReference>
<dbReference type="PROSITE" id="PS51192">
    <property type="entry name" value="HELICASE_ATP_BIND_1"/>
    <property type="match status" value="2"/>
</dbReference>
<dbReference type="PROSITE" id="PS51194">
    <property type="entry name" value="HELICASE_CTER"/>
    <property type="match status" value="2"/>
</dbReference>
<reference key="1">
    <citation type="journal article" date="2000" name="Science">
        <title>The genome sequence of Drosophila melanogaster.</title>
        <authorList>
            <person name="Adams M.D."/>
            <person name="Celniker S.E."/>
            <person name="Holt R.A."/>
            <person name="Evans C.A."/>
            <person name="Gocayne J.D."/>
            <person name="Amanatides P.G."/>
            <person name="Scherer S.E."/>
            <person name="Li P.W."/>
            <person name="Hoskins R.A."/>
            <person name="Galle R.F."/>
            <person name="George R.A."/>
            <person name="Lewis S.E."/>
            <person name="Richards S."/>
            <person name="Ashburner M."/>
            <person name="Henderson S.N."/>
            <person name="Sutton G.G."/>
            <person name="Wortman J.R."/>
            <person name="Yandell M.D."/>
            <person name="Zhang Q."/>
            <person name="Chen L.X."/>
            <person name="Brandon R.C."/>
            <person name="Rogers Y.-H.C."/>
            <person name="Blazej R.G."/>
            <person name="Champe M."/>
            <person name="Pfeiffer B.D."/>
            <person name="Wan K.H."/>
            <person name="Doyle C."/>
            <person name="Baxter E.G."/>
            <person name="Helt G."/>
            <person name="Nelson C.R."/>
            <person name="Miklos G.L.G."/>
            <person name="Abril J.F."/>
            <person name="Agbayani A."/>
            <person name="An H.-J."/>
            <person name="Andrews-Pfannkoch C."/>
            <person name="Baldwin D."/>
            <person name="Ballew R.M."/>
            <person name="Basu A."/>
            <person name="Baxendale J."/>
            <person name="Bayraktaroglu L."/>
            <person name="Beasley E.M."/>
            <person name="Beeson K.Y."/>
            <person name="Benos P.V."/>
            <person name="Berman B.P."/>
            <person name="Bhandari D."/>
            <person name="Bolshakov S."/>
            <person name="Borkova D."/>
            <person name="Botchan M.R."/>
            <person name="Bouck J."/>
            <person name="Brokstein P."/>
            <person name="Brottier P."/>
            <person name="Burtis K.C."/>
            <person name="Busam D.A."/>
            <person name="Butler H."/>
            <person name="Cadieu E."/>
            <person name="Center A."/>
            <person name="Chandra I."/>
            <person name="Cherry J.M."/>
            <person name="Cawley S."/>
            <person name="Dahlke C."/>
            <person name="Davenport L.B."/>
            <person name="Davies P."/>
            <person name="de Pablos B."/>
            <person name="Delcher A."/>
            <person name="Deng Z."/>
            <person name="Mays A.D."/>
            <person name="Dew I."/>
            <person name="Dietz S.M."/>
            <person name="Dodson K."/>
            <person name="Doup L.E."/>
            <person name="Downes M."/>
            <person name="Dugan-Rocha S."/>
            <person name="Dunkov B.C."/>
            <person name="Dunn P."/>
            <person name="Durbin K.J."/>
            <person name="Evangelista C.C."/>
            <person name="Ferraz C."/>
            <person name="Ferriera S."/>
            <person name="Fleischmann W."/>
            <person name="Fosler C."/>
            <person name="Gabrielian A.E."/>
            <person name="Garg N.S."/>
            <person name="Gelbart W.M."/>
            <person name="Glasser K."/>
            <person name="Glodek A."/>
            <person name="Gong F."/>
            <person name="Gorrell J.H."/>
            <person name="Gu Z."/>
            <person name="Guan P."/>
            <person name="Harris M."/>
            <person name="Harris N.L."/>
            <person name="Harvey D.A."/>
            <person name="Heiman T.J."/>
            <person name="Hernandez J.R."/>
            <person name="Houck J."/>
            <person name="Hostin D."/>
            <person name="Houston K.A."/>
            <person name="Howland T.J."/>
            <person name="Wei M.-H."/>
            <person name="Ibegwam C."/>
            <person name="Jalali M."/>
            <person name="Kalush F."/>
            <person name="Karpen G.H."/>
            <person name="Ke Z."/>
            <person name="Kennison J.A."/>
            <person name="Ketchum K.A."/>
            <person name="Kimmel B.E."/>
            <person name="Kodira C.D."/>
            <person name="Kraft C.L."/>
            <person name="Kravitz S."/>
            <person name="Kulp D."/>
            <person name="Lai Z."/>
            <person name="Lasko P."/>
            <person name="Lei Y."/>
            <person name="Levitsky A.A."/>
            <person name="Li J.H."/>
            <person name="Li Z."/>
            <person name="Liang Y."/>
            <person name="Lin X."/>
            <person name="Liu X."/>
            <person name="Mattei B."/>
            <person name="McIntosh T.C."/>
            <person name="McLeod M.P."/>
            <person name="McPherson D."/>
            <person name="Merkulov G."/>
            <person name="Milshina N.V."/>
            <person name="Mobarry C."/>
            <person name="Morris J."/>
            <person name="Moshrefi A."/>
            <person name="Mount S.M."/>
            <person name="Moy M."/>
            <person name="Murphy B."/>
            <person name="Murphy L."/>
            <person name="Muzny D.M."/>
            <person name="Nelson D.L."/>
            <person name="Nelson D.R."/>
            <person name="Nelson K.A."/>
            <person name="Nixon K."/>
            <person name="Nusskern D.R."/>
            <person name="Pacleb J.M."/>
            <person name="Palazzolo M."/>
            <person name="Pittman G.S."/>
            <person name="Pan S."/>
            <person name="Pollard J."/>
            <person name="Puri V."/>
            <person name="Reese M.G."/>
            <person name="Reinert K."/>
            <person name="Remington K."/>
            <person name="Saunders R.D.C."/>
            <person name="Scheeler F."/>
            <person name="Shen H."/>
            <person name="Shue B.C."/>
            <person name="Siden-Kiamos I."/>
            <person name="Simpson M."/>
            <person name="Skupski M.P."/>
            <person name="Smith T.J."/>
            <person name="Spier E."/>
            <person name="Spradling A.C."/>
            <person name="Stapleton M."/>
            <person name="Strong R."/>
            <person name="Sun E."/>
            <person name="Svirskas R."/>
            <person name="Tector C."/>
            <person name="Turner R."/>
            <person name="Venter E."/>
            <person name="Wang A.H."/>
            <person name="Wang X."/>
            <person name="Wang Z.-Y."/>
            <person name="Wassarman D.A."/>
            <person name="Weinstock G.M."/>
            <person name="Weissenbach J."/>
            <person name="Williams S.M."/>
            <person name="Woodage T."/>
            <person name="Worley K.C."/>
            <person name="Wu D."/>
            <person name="Yang S."/>
            <person name="Yao Q.A."/>
            <person name="Ye J."/>
            <person name="Yeh R.-F."/>
            <person name="Zaveri J.S."/>
            <person name="Zhan M."/>
            <person name="Zhang G."/>
            <person name="Zhao Q."/>
            <person name="Zheng L."/>
            <person name="Zheng X.H."/>
            <person name="Zhong F.N."/>
            <person name="Zhong W."/>
            <person name="Zhou X."/>
            <person name="Zhu S.C."/>
            <person name="Zhu X."/>
            <person name="Smith H.O."/>
            <person name="Gibbs R.A."/>
            <person name="Myers E.W."/>
            <person name="Rubin G.M."/>
            <person name="Venter J.C."/>
        </authorList>
    </citation>
    <scope>NUCLEOTIDE SEQUENCE [LARGE SCALE GENOMIC DNA]</scope>
    <source>
        <strain>Berkeley</strain>
    </source>
</reference>
<reference key="2">
    <citation type="journal article" date="2002" name="Genome Biol.">
        <title>Annotation of the Drosophila melanogaster euchromatic genome: a systematic review.</title>
        <authorList>
            <person name="Misra S."/>
            <person name="Crosby M.A."/>
            <person name="Mungall C.J."/>
            <person name="Matthews B.B."/>
            <person name="Campbell K.S."/>
            <person name="Hradecky P."/>
            <person name="Huang Y."/>
            <person name="Kaminker J.S."/>
            <person name="Millburn G.H."/>
            <person name="Prochnik S.E."/>
            <person name="Smith C.D."/>
            <person name="Tupy J.L."/>
            <person name="Whitfield E.J."/>
            <person name="Bayraktaroglu L."/>
            <person name="Berman B.P."/>
            <person name="Bettencourt B.R."/>
            <person name="Celniker S.E."/>
            <person name="de Grey A.D.N.J."/>
            <person name="Drysdale R.A."/>
            <person name="Harris N.L."/>
            <person name="Richter J."/>
            <person name="Russo S."/>
            <person name="Schroeder A.J."/>
            <person name="Shu S.Q."/>
            <person name="Stapleton M."/>
            <person name="Yamada C."/>
            <person name="Ashburner M."/>
            <person name="Gelbart W.M."/>
            <person name="Rubin G.M."/>
            <person name="Lewis S.E."/>
        </authorList>
    </citation>
    <scope>GENOME REANNOTATION</scope>
    <source>
        <strain>Berkeley</strain>
    </source>
</reference>
<reference key="3">
    <citation type="submission" date="2004-10" db="EMBL/GenBank/DDBJ databases">
        <authorList>
            <person name="Stapleton M."/>
            <person name="Carlson J.W."/>
            <person name="Chavez C."/>
            <person name="Frise E."/>
            <person name="George R.A."/>
            <person name="Pacleb J.M."/>
            <person name="Park S."/>
            <person name="Wan K.H."/>
            <person name="Yu C."/>
            <person name="Rubin G.M."/>
            <person name="Celniker S.E."/>
        </authorList>
    </citation>
    <scope>NUCLEOTIDE SEQUENCE [LARGE SCALE MRNA]</scope>
    <source>
        <strain>Berkeley</strain>
        <tissue>Embryo</tissue>
    </source>
</reference>
<reference key="4">
    <citation type="journal article" date="2002" name="Genome Biol.">
        <title>A Drosophila full-length cDNA resource.</title>
        <authorList>
            <person name="Stapleton M."/>
            <person name="Carlson J.W."/>
            <person name="Brokstein P."/>
            <person name="Yu C."/>
            <person name="Champe M."/>
            <person name="George R.A."/>
            <person name="Guarin H."/>
            <person name="Kronmiller B."/>
            <person name="Pacleb J.M."/>
            <person name="Park S."/>
            <person name="Wan K.H."/>
            <person name="Rubin G.M."/>
            <person name="Celniker S.E."/>
        </authorList>
    </citation>
    <scope>NUCLEOTIDE SEQUENCE [LARGE SCALE MRNA] OF 1212-2130</scope>
    <source>
        <strain>Berkeley</strain>
        <tissue>Ovary</tissue>
    </source>
</reference>
<protein>
    <recommendedName>
        <fullName evidence="1">U5 small nuclear ribonucleoprotein 200 kDa helicase</fullName>
        <ecNumber evidence="1">3.6.4.13</ecNumber>
    </recommendedName>
    <alternativeName>
        <fullName>Protein lethal (3) 72Ab</fullName>
    </alternativeName>
</protein>
<name>U520_DROME</name>
<organism>
    <name type="scientific">Drosophila melanogaster</name>
    <name type="common">Fruit fly</name>
    <dbReference type="NCBI Taxonomy" id="7227"/>
    <lineage>
        <taxon>Eukaryota</taxon>
        <taxon>Metazoa</taxon>
        <taxon>Ecdysozoa</taxon>
        <taxon>Arthropoda</taxon>
        <taxon>Hexapoda</taxon>
        <taxon>Insecta</taxon>
        <taxon>Pterygota</taxon>
        <taxon>Neoptera</taxon>
        <taxon>Endopterygota</taxon>
        <taxon>Diptera</taxon>
        <taxon>Brachycera</taxon>
        <taxon>Muscomorpha</taxon>
        <taxon>Ephydroidea</taxon>
        <taxon>Drosophilidae</taxon>
        <taxon>Drosophila</taxon>
        <taxon>Sophophora</taxon>
    </lineage>
</organism>
<keyword id="KW-0067">ATP-binding</keyword>
<keyword id="KW-0347">Helicase</keyword>
<keyword id="KW-0378">Hydrolase</keyword>
<keyword id="KW-0507">mRNA processing</keyword>
<keyword id="KW-0508">mRNA splicing</keyword>
<keyword id="KW-0547">Nucleotide-binding</keyword>
<keyword id="KW-0539">Nucleus</keyword>
<keyword id="KW-1185">Reference proteome</keyword>
<keyword id="KW-0677">Repeat</keyword>
<keyword id="KW-0747">Spliceosome</keyword>
<feature type="chain" id="PRO_0000102089" description="U5 small nuclear ribonucleoprotein 200 kDa helicase">
    <location>
        <begin position="1"/>
        <end position="2142"/>
    </location>
</feature>
<feature type="domain" description="Helicase ATP-binding 1" evidence="2">
    <location>
        <begin position="490"/>
        <end position="673"/>
    </location>
</feature>
<feature type="domain" description="Helicase C-terminal 1" evidence="3">
    <location>
        <begin position="684"/>
        <end position="917"/>
    </location>
</feature>
<feature type="domain" description="SEC63 1">
    <location>
        <begin position="981"/>
        <end position="1286"/>
    </location>
</feature>
<feature type="domain" description="Helicase ATP-binding 2" evidence="2">
    <location>
        <begin position="1337"/>
        <end position="1511"/>
    </location>
</feature>
<feature type="domain" description="Helicase C-terminal 2" evidence="3">
    <location>
        <begin position="1544"/>
        <end position="1752"/>
    </location>
</feature>
<feature type="domain" description="SEC63 2">
    <location>
        <begin position="1811"/>
        <end position="2128"/>
    </location>
</feature>
<feature type="region of interest" description="Disordered" evidence="4">
    <location>
        <begin position="52"/>
        <end position="74"/>
    </location>
</feature>
<feature type="region of interest" description="Disordered" evidence="4">
    <location>
        <begin position="211"/>
        <end position="234"/>
    </location>
</feature>
<feature type="region of interest" description="Disordered" evidence="4">
    <location>
        <begin position="366"/>
        <end position="396"/>
    </location>
</feature>
<feature type="short sequence motif" description="DEIH box">
    <location>
        <begin position="615"/>
        <end position="618"/>
    </location>
</feature>
<feature type="short sequence motif" description="DELQ box">
    <location>
        <begin position="1453"/>
        <end position="1456"/>
    </location>
</feature>
<feature type="compositionally biased region" description="Basic and acidic residues" evidence="4">
    <location>
        <begin position="369"/>
        <end position="391"/>
    </location>
</feature>
<feature type="binding site" evidence="2">
    <location>
        <begin position="503"/>
        <end position="510"/>
    </location>
    <ligand>
        <name>ATP</name>
        <dbReference type="ChEBI" id="CHEBI:30616"/>
    </ligand>
</feature>
<feature type="binding site" evidence="2">
    <location>
        <begin position="1350"/>
        <end position="1357"/>
    </location>
    <ligand>
        <name>ATP</name>
        <dbReference type="ChEBI" id="CHEBI:30616"/>
    </ligand>
</feature>
<gene>
    <name evidence="6" type="primary">Brr2</name>
    <name type="synonym">l(3)72Ab</name>
    <name evidence="6" type="ORF">CG5931</name>
</gene>
<sequence length="2142" mass="244510">MADAAARQLQYEYKANSNLVLQADVRLIERPRRDEATGEVCSLVGKLDGTRMGDRYQRTKPEKTEERKVKRQKRDEAQYDFERMKGATLLSEGIDEMVGIVYRPKTQETRQTYEVLLSFIQEALGDQPRDILCGAADEILAVLKNDRLKDRERKKDIDSLLGAVTDERFALLVNLGKKITDFGSDAVNALTAAPNNEEQIDETYGINVQFEESEEESDNDMYGEIRDDDAQDEGEEARIDHTLHAENLANEEAANNVKKERSLHPLDIDAYWLQRCLSKFYKDAMVSQSKAADVLKILKDAADDRDCENQLVLLLGYDCFDFIKQLKLNRQMVLYCTMLASAQTDSERQRIREKMRGNSALAKILRQLDTGKSEDQEEGEARGSKRGKGDAEDGGAAAAGQVAGVRQLLELEEMAFTQGSHFMANKRCQLPDGSYRKQRKGYEEVHVPALKPVPFDANEELQPVDKLPKYVQPVFEGFKTLNRIQSRLYKAALDSDENMLLCAPTGAGKTNVALLTMMREIGKHINEDGTINAQDFKIIYVAPMKSLVQEMVGNFGRRLACYNLTVSELTGDHQLTREQIAATQVIVCTPEKWDIITRKGGERTFVSLVRLVIIDEIHLLHDERGPVLEALVARTIRNIETTQEEVRLVGLSATLPNYQDVATFLRVKPDKGLFYFDNSYRPVSLEQQYIGVTEKKALKRFQVMNEIVYEKTMEHAGRNQVLVFVHSRKETGKTARAVRDMCLEQDTLGSFLKEGSASMEVLRTEAEQVKNTELKELLPYGFAIHHAGMTRVDRTLVEDLFADRHIQVLVSTATLAWGVNLPAHTVIIKGTQVYNPEKGRWVELSALDVLQMLGRAGRPQYDTKGEGILITNHSELQFYLSLLNQQLPIESQFISKLPDMLNAEIVLGTVQHLQDAVNWLGYTYLYIRMLRNPTLYGVSHDAIKADPLLEQHRADLLHTAACCLERSGLIKYDRKTGHFQVTDLGRIASHYYLTHETMLTYNQLLKQTLSEIELFRVFSLSSEFRHISVREEEKLELQKLMERVPIPIKESIEEHSAKVNVLLQAYISQLKLEGFALMSDMVFITQSAARLMRAIFEIVLTRGWAQLADKTLTLCKMIDRRMWQSMTPLRQFKKMPDEIAKKLEKKHFPWGRLYDLEPHELGELIRVPKLGKTIHKFVHQFPKLELSTHIQPITRGTLRVELTITPDFQWDEKVHGQSEGFWVLIEDVDSELILHHEFFLLKQKYSQDEHQLKFFVPVFEPLPPQYFLRIVSDRWIGAETQLPVSFRHLILPEKNMPPTELLDLQPLPISALRQPKFESFYSQRFPQFNPIQTQVFNAVYNSDENVFVGAPTGSGKMTIAEFAIMRLFTTQSDARCVYLVSEEALADLVFADWHSKFGSLDIKVVKLTGETGTDLKLIAKGQLVITTADKWDVLSRRWKQRKNVQLVNLFIVDELQLVGGEEGPVLEIVCSRMRYISSQIEKQIRIVALSASLTDARDVAQWLGCNPNATFNFHPSVRPIPLELHIQGYNVTHNATRIATMSKPVYNAILKYSAHKPVIVFVSSRKQARLTAIDVLTYAASDLQPNRFFHAEEEDIKPFLERMTDKTLKETLAQGVAYLHEGLSASDHRLVEQLFDSGAVQVAVISRDLCWGMSISAHLVIIMDTQFYNGKNHSYEDYPITDVLQMIGRANRPNEDADAKCVLMCQSSKKDFFKKFINEPLPIESHLDHRMHDHFNAEVVTKTIENKQDAVDYLTWTFLYRRLTQNPNYYNLQGVTHRHLSDHLSELVENTLSDLEQSKCISVEDDMDTLPLNLGMIAAYYYINYTTIELFSLSLNSKTKVRGLLEIISSAAEYEDVVVRHHEEQVLRTLSQRLPNKLTGPNETAPKFNDPHIKTNLLLQAHLSRLQLGPELQGDTEQILSKAIRLIQACVDVLSSNGWLSPAVAAMELAQMVTQAMWSKDSYLKQLPHFSPEIVKRCTEKKIETVFDIMELEDEDRTRLLQLSDLQMADVARFCNRYPNIELNYEVVDKDRINSGSTVNVVVQLEREDEVTGPVIAPFFPQKREEGWWVVIGDPKTNSLLSIKRLTLQQKAKVKLDFVAPSPGKHDYTLYYMSDSYLGCDQEYKFSIEVGDFQSESESESD</sequence>
<proteinExistence type="evidence at transcript level"/>